<dbReference type="EC" id="2.4.1.109"/>
<dbReference type="EMBL" id="X95956">
    <property type="protein sequence ID" value="CAA65194.1"/>
    <property type="status" value="ALT_FRAME"/>
    <property type="molecule type" value="mRNA"/>
</dbReference>
<dbReference type="EMBL" id="AB176550">
    <property type="protein sequence ID" value="BAD54754.1"/>
    <property type="molecule type" value="mRNA"/>
</dbReference>
<dbReference type="EMBL" id="AE014296">
    <property type="protein sequence ID" value="AAF50046.2"/>
    <property type="molecule type" value="Genomic_DNA"/>
</dbReference>
<dbReference type="EMBL" id="AY071270">
    <property type="protein sequence ID" value="AAL48892.1"/>
    <property type="status" value="ALT_SEQ"/>
    <property type="molecule type" value="mRNA"/>
</dbReference>
<dbReference type="RefSeq" id="NP_524025.2">
    <property type="nucleotide sequence ID" value="NM_079301.4"/>
</dbReference>
<dbReference type="SMR" id="Q9VTK2"/>
<dbReference type="BioGRID" id="64662">
    <property type="interactions" value="2"/>
</dbReference>
<dbReference type="ComplexPortal" id="CPX-2372">
    <property type="entry name" value="POMT1-POMT2 O-mannosyltransferase complex"/>
</dbReference>
<dbReference type="FunCoup" id="Q9VTK2">
    <property type="interactions" value="389"/>
</dbReference>
<dbReference type="IntAct" id="Q9VTK2">
    <property type="interactions" value="3"/>
</dbReference>
<dbReference type="STRING" id="7227.FBpp0075877"/>
<dbReference type="CAZy" id="GT39">
    <property type="family name" value="Glycosyltransferase Family 39"/>
</dbReference>
<dbReference type="GlyCosmos" id="Q9VTK2">
    <property type="glycosylation" value="2 sites, No reported glycans"/>
</dbReference>
<dbReference type="GlyGen" id="Q9VTK2">
    <property type="glycosylation" value="3 sites"/>
</dbReference>
<dbReference type="PaxDb" id="7227-FBpp0075877"/>
<dbReference type="EnsemblMetazoa" id="FBtr0076146">
    <property type="protein sequence ID" value="FBpp0075877"/>
    <property type="gene ID" value="FBgn0003292"/>
</dbReference>
<dbReference type="GeneID" id="39297"/>
<dbReference type="KEGG" id="dme:Dmel_CG6097"/>
<dbReference type="AGR" id="FB:FBgn0003292"/>
<dbReference type="CTD" id="39297"/>
<dbReference type="FlyBase" id="FBgn0003292">
    <property type="gene designation" value="rt"/>
</dbReference>
<dbReference type="VEuPathDB" id="VectorBase:FBgn0003292"/>
<dbReference type="eggNOG" id="KOG3359">
    <property type="taxonomic scope" value="Eukaryota"/>
</dbReference>
<dbReference type="GeneTree" id="ENSGT00940000158049"/>
<dbReference type="HOGENOM" id="CLU_008438_1_0_1"/>
<dbReference type="InParanoid" id="Q9VTK2"/>
<dbReference type="OMA" id="NCHLNAP"/>
<dbReference type="OrthoDB" id="292747at2759"/>
<dbReference type="PhylomeDB" id="Q9VTK2"/>
<dbReference type="Reactome" id="R-DME-5173105">
    <property type="pathway name" value="O-linked glycosylation"/>
</dbReference>
<dbReference type="SignaLink" id="Q9VTK2"/>
<dbReference type="UniPathway" id="UPA00378"/>
<dbReference type="BioGRID-ORCS" id="39297">
    <property type="hits" value="0 hits in 1 CRISPR screen"/>
</dbReference>
<dbReference type="ChiTaRS" id="rt">
    <property type="organism name" value="fly"/>
</dbReference>
<dbReference type="GenomeRNAi" id="39297"/>
<dbReference type="PRO" id="PR:Q9VTK2"/>
<dbReference type="Proteomes" id="UP000000803">
    <property type="component" value="Chromosome 3L"/>
</dbReference>
<dbReference type="Bgee" id="FBgn0003292">
    <property type="expression patterns" value="Expressed in epithelial cell in haltere and 39 other cell types or tissues"/>
</dbReference>
<dbReference type="GO" id="GO:0031502">
    <property type="term" value="C:dolichyl-phosphate-mannose-protein mannosyltransferase complex"/>
    <property type="evidence" value="ECO:0000314"/>
    <property type="project" value="FlyBase"/>
</dbReference>
<dbReference type="GO" id="GO:0005783">
    <property type="term" value="C:endoplasmic reticulum"/>
    <property type="evidence" value="ECO:0000314"/>
    <property type="project" value="UniProtKB"/>
</dbReference>
<dbReference type="GO" id="GO:0005789">
    <property type="term" value="C:endoplasmic reticulum membrane"/>
    <property type="evidence" value="ECO:0000314"/>
    <property type="project" value="FlyBase"/>
</dbReference>
<dbReference type="GO" id="GO:0004169">
    <property type="term" value="F:dolichyl-phosphate-mannose-protein mannosyltransferase activity"/>
    <property type="evidence" value="ECO:0000314"/>
    <property type="project" value="UniProtKB"/>
</dbReference>
<dbReference type="GO" id="GO:0016203">
    <property type="term" value="P:muscle attachment"/>
    <property type="evidence" value="ECO:0000316"/>
    <property type="project" value="FlyBase"/>
</dbReference>
<dbReference type="GO" id="GO:0007517">
    <property type="term" value="P:muscle organ development"/>
    <property type="evidence" value="ECO:0000315"/>
    <property type="project" value="UniProtKB"/>
</dbReference>
<dbReference type="GO" id="GO:0035269">
    <property type="term" value="P:protein O-linked mannosylation"/>
    <property type="evidence" value="ECO:0000314"/>
    <property type="project" value="FlyBase"/>
</dbReference>
<dbReference type="GO" id="GO:0060025">
    <property type="term" value="P:regulation of synaptic activity"/>
    <property type="evidence" value="ECO:0000315"/>
    <property type="project" value="FlyBase"/>
</dbReference>
<dbReference type="GO" id="GO:0045214">
    <property type="term" value="P:sarcomere organization"/>
    <property type="evidence" value="ECO:0000316"/>
    <property type="project" value="FlyBase"/>
</dbReference>
<dbReference type="GO" id="GO:0007525">
    <property type="term" value="P:somatic muscle development"/>
    <property type="evidence" value="ECO:0000315"/>
    <property type="project" value="FlyBase"/>
</dbReference>
<dbReference type="GO" id="GO:0007385">
    <property type="term" value="P:specification of segmental identity, abdomen"/>
    <property type="evidence" value="ECO:0000315"/>
    <property type="project" value="UniProtKB"/>
</dbReference>
<dbReference type="CDD" id="cd23281">
    <property type="entry name" value="beta-trefoil_MIR_POMT1"/>
    <property type="match status" value="1"/>
</dbReference>
<dbReference type="FunFam" id="2.80.10.50:FF:000012">
    <property type="entry name" value="Protein O-mannosyl-transferase 1"/>
    <property type="match status" value="1"/>
</dbReference>
<dbReference type="Gene3D" id="2.80.10.50">
    <property type="match status" value="1"/>
</dbReference>
<dbReference type="InterPro" id="IPR027005">
    <property type="entry name" value="GlyclTrfase_39-like"/>
</dbReference>
<dbReference type="InterPro" id="IPR003342">
    <property type="entry name" value="Glyco_trans_39/83"/>
</dbReference>
<dbReference type="InterPro" id="IPR036300">
    <property type="entry name" value="MIR_dom_sf"/>
</dbReference>
<dbReference type="InterPro" id="IPR016093">
    <property type="entry name" value="MIR_motif"/>
</dbReference>
<dbReference type="InterPro" id="IPR032421">
    <property type="entry name" value="PMT_4TMC"/>
</dbReference>
<dbReference type="PANTHER" id="PTHR10050">
    <property type="entry name" value="DOLICHYL-PHOSPHATE-MANNOSE--PROTEIN MANNOSYLTRANSFERASE"/>
    <property type="match status" value="1"/>
</dbReference>
<dbReference type="PANTHER" id="PTHR10050:SF51">
    <property type="entry name" value="PROTEIN O-MANNOSYL-TRANSFERASE 1"/>
    <property type="match status" value="1"/>
</dbReference>
<dbReference type="Pfam" id="PF02815">
    <property type="entry name" value="MIR"/>
    <property type="match status" value="1"/>
</dbReference>
<dbReference type="Pfam" id="PF02366">
    <property type="entry name" value="PMT"/>
    <property type="match status" value="1"/>
</dbReference>
<dbReference type="Pfam" id="PF16192">
    <property type="entry name" value="PMT_4TMC"/>
    <property type="match status" value="1"/>
</dbReference>
<dbReference type="SMART" id="SM00472">
    <property type="entry name" value="MIR"/>
    <property type="match status" value="3"/>
</dbReference>
<dbReference type="SUPFAM" id="SSF82109">
    <property type="entry name" value="MIR domain"/>
    <property type="match status" value="1"/>
</dbReference>
<dbReference type="PROSITE" id="PS50919">
    <property type="entry name" value="MIR"/>
    <property type="match status" value="3"/>
</dbReference>
<reference evidence="9 13" key="1">
    <citation type="journal article" date="1996" name="Proc. Natl. Acad. Sci. U.S.A.">
        <title>Mutations in the rotated abdomen locus affect muscle development and reveal an intrinsic asymmetry in Drosophila.</title>
        <authorList>
            <person name="Martin-Blanco E."/>
            <person name="Garcia-Bellido A."/>
        </authorList>
    </citation>
    <scope>NUCLEOTIDE SEQUENCE [MRNA]</scope>
    <scope>FUNCTION</scope>
    <scope>TISSUE SPECIFICITY</scope>
    <scope>DEVELOPMENTAL STAGE</scope>
    <scope>DISRUPTION PHENOTYPE</scope>
    <source>
        <tissue>Embryo</tissue>
    </source>
</reference>
<reference evidence="9 12" key="2">
    <citation type="journal article" date="2004" name="J. Biol. Chem.">
        <title>The twisted abdomen phenotype of Drosophila POMT1 and POMT2 mutants coincides with their heterophilic protein O-mannosyltransferase activity.</title>
        <authorList>
            <person name="Ichimiya T."/>
            <person name="Manya H."/>
            <person name="Ohmae Y."/>
            <person name="Yoshida H."/>
            <person name="Takahashi K."/>
            <person name="Ueda R."/>
            <person name="Endo T."/>
            <person name="Nishihara S."/>
        </authorList>
    </citation>
    <scope>NUCLEOTIDE SEQUENCE [MRNA]</scope>
    <scope>FUNCTION</scope>
    <scope>TISSUE SPECIFICITY</scope>
    <scope>DEVELOPMENTAL STAGE</scope>
    <scope>DISRUPTION PHENOTYPE</scope>
</reference>
<reference evidence="10" key="3">
    <citation type="journal article" date="2000" name="Science">
        <title>The genome sequence of Drosophila melanogaster.</title>
        <authorList>
            <person name="Adams M.D."/>
            <person name="Celniker S.E."/>
            <person name="Holt R.A."/>
            <person name="Evans C.A."/>
            <person name="Gocayne J.D."/>
            <person name="Amanatides P.G."/>
            <person name="Scherer S.E."/>
            <person name="Li P.W."/>
            <person name="Hoskins R.A."/>
            <person name="Galle R.F."/>
            <person name="George R.A."/>
            <person name="Lewis S.E."/>
            <person name="Richards S."/>
            <person name="Ashburner M."/>
            <person name="Henderson S.N."/>
            <person name="Sutton G.G."/>
            <person name="Wortman J.R."/>
            <person name="Yandell M.D."/>
            <person name="Zhang Q."/>
            <person name="Chen L.X."/>
            <person name="Brandon R.C."/>
            <person name="Rogers Y.-H.C."/>
            <person name="Blazej R.G."/>
            <person name="Champe M."/>
            <person name="Pfeiffer B.D."/>
            <person name="Wan K.H."/>
            <person name="Doyle C."/>
            <person name="Baxter E.G."/>
            <person name="Helt G."/>
            <person name="Nelson C.R."/>
            <person name="Miklos G.L.G."/>
            <person name="Abril J.F."/>
            <person name="Agbayani A."/>
            <person name="An H.-J."/>
            <person name="Andrews-Pfannkoch C."/>
            <person name="Baldwin D."/>
            <person name="Ballew R.M."/>
            <person name="Basu A."/>
            <person name="Baxendale J."/>
            <person name="Bayraktaroglu L."/>
            <person name="Beasley E.M."/>
            <person name="Beeson K.Y."/>
            <person name="Benos P.V."/>
            <person name="Berman B.P."/>
            <person name="Bhandari D."/>
            <person name="Bolshakov S."/>
            <person name="Borkova D."/>
            <person name="Botchan M.R."/>
            <person name="Bouck J."/>
            <person name="Brokstein P."/>
            <person name="Brottier P."/>
            <person name="Burtis K.C."/>
            <person name="Busam D.A."/>
            <person name="Butler H."/>
            <person name="Cadieu E."/>
            <person name="Center A."/>
            <person name="Chandra I."/>
            <person name="Cherry J.M."/>
            <person name="Cawley S."/>
            <person name="Dahlke C."/>
            <person name="Davenport L.B."/>
            <person name="Davies P."/>
            <person name="de Pablos B."/>
            <person name="Delcher A."/>
            <person name="Deng Z."/>
            <person name="Mays A.D."/>
            <person name="Dew I."/>
            <person name="Dietz S.M."/>
            <person name="Dodson K."/>
            <person name="Doup L.E."/>
            <person name="Downes M."/>
            <person name="Dugan-Rocha S."/>
            <person name="Dunkov B.C."/>
            <person name="Dunn P."/>
            <person name="Durbin K.J."/>
            <person name="Evangelista C.C."/>
            <person name="Ferraz C."/>
            <person name="Ferriera S."/>
            <person name="Fleischmann W."/>
            <person name="Fosler C."/>
            <person name="Gabrielian A.E."/>
            <person name="Garg N.S."/>
            <person name="Gelbart W.M."/>
            <person name="Glasser K."/>
            <person name="Glodek A."/>
            <person name="Gong F."/>
            <person name="Gorrell J.H."/>
            <person name="Gu Z."/>
            <person name="Guan P."/>
            <person name="Harris M."/>
            <person name="Harris N.L."/>
            <person name="Harvey D.A."/>
            <person name="Heiman T.J."/>
            <person name="Hernandez J.R."/>
            <person name="Houck J."/>
            <person name="Hostin D."/>
            <person name="Houston K.A."/>
            <person name="Howland T.J."/>
            <person name="Wei M.-H."/>
            <person name="Ibegwam C."/>
            <person name="Jalali M."/>
            <person name="Kalush F."/>
            <person name="Karpen G.H."/>
            <person name="Ke Z."/>
            <person name="Kennison J.A."/>
            <person name="Ketchum K.A."/>
            <person name="Kimmel B.E."/>
            <person name="Kodira C.D."/>
            <person name="Kraft C.L."/>
            <person name="Kravitz S."/>
            <person name="Kulp D."/>
            <person name="Lai Z."/>
            <person name="Lasko P."/>
            <person name="Lei Y."/>
            <person name="Levitsky A.A."/>
            <person name="Li J.H."/>
            <person name="Li Z."/>
            <person name="Liang Y."/>
            <person name="Lin X."/>
            <person name="Liu X."/>
            <person name="Mattei B."/>
            <person name="McIntosh T.C."/>
            <person name="McLeod M.P."/>
            <person name="McPherson D."/>
            <person name="Merkulov G."/>
            <person name="Milshina N.V."/>
            <person name="Mobarry C."/>
            <person name="Morris J."/>
            <person name="Moshrefi A."/>
            <person name="Mount S.M."/>
            <person name="Moy M."/>
            <person name="Murphy B."/>
            <person name="Murphy L."/>
            <person name="Muzny D.M."/>
            <person name="Nelson D.L."/>
            <person name="Nelson D.R."/>
            <person name="Nelson K.A."/>
            <person name="Nixon K."/>
            <person name="Nusskern D.R."/>
            <person name="Pacleb J.M."/>
            <person name="Palazzolo M."/>
            <person name="Pittman G.S."/>
            <person name="Pan S."/>
            <person name="Pollard J."/>
            <person name="Puri V."/>
            <person name="Reese M.G."/>
            <person name="Reinert K."/>
            <person name="Remington K."/>
            <person name="Saunders R.D.C."/>
            <person name="Scheeler F."/>
            <person name="Shen H."/>
            <person name="Shue B.C."/>
            <person name="Siden-Kiamos I."/>
            <person name="Simpson M."/>
            <person name="Skupski M.P."/>
            <person name="Smith T.J."/>
            <person name="Spier E."/>
            <person name="Spradling A.C."/>
            <person name="Stapleton M."/>
            <person name="Strong R."/>
            <person name="Sun E."/>
            <person name="Svirskas R."/>
            <person name="Tector C."/>
            <person name="Turner R."/>
            <person name="Venter E."/>
            <person name="Wang A.H."/>
            <person name="Wang X."/>
            <person name="Wang Z.-Y."/>
            <person name="Wassarman D.A."/>
            <person name="Weinstock G.M."/>
            <person name="Weissenbach J."/>
            <person name="Williams S.M."/>
            <person name="Woodage T."/>
            <person name="Worley K.C."/>
            <person name="Wu D."/>
            <person name="Yang S."/>
            <person name="Yao Q.A."/>
            <person name="Ye J."/>
            <person name="Yeh R.-F."/>
            <person name="Zaveri J.S."/>
            <person name="Zhan M."/>
            <person name="Zhang G."/>
            <person name="Zhao Q."/>
            <person name="Zheng L."/>
            <person name="Zheng X.H."/>
            <person name="Zhong F.N."/>
            <person name="Zhong W."/>
            <person name="Zhou X."/>
            <person name="Zhu S.C."/>
            <person name="Zhu X."/>
            <person name="Smith H.O."/>
            <person name="Gibbs R.A."/>
            <person name="Myers E.W."/>
            <person name="Rubin G.M."/>
            <person name="Venter J.C."/>
        </authorList>
    </citation>
    <scope>NUCLEOTIDE SEQUENCE [LARGE SCALE GENOMIC DNA]</scope>
    <source>
        <strain evidence="4">Berkeley</strain>
    </source>
</reference>
<reference evidence="9 10" key="4">
    <citation type="journal article" date="2002" name="Genome Biol.">
        <title>Annotation of the Drosophila melanogaster euchromatic genome: a systematic review.</title>
        <authorList>
            <person name="Misra S."/>
            <person name="Crosby M.A."/>
            <person name="Mungall C.J."/>
            <person name="Matthews B.B."/>
            <person name="Campbell K.S."/>
            <person name="Hradecky P."/>
            <person name="Huang Y."/>
            <person name="Kaminker J.S."/>
            <person name="Millburn G.H."/>
            <person name="Prochnik S.E."/>
            <person name="Smith C.D."/>
            <person name="Tupy J.L."/>
            <person name="Whitfield E.J."/>
            <person name="Bayraktaroglu L."/>
            <person name="Berman B.P."/>
            <person name="Bettencourt B.R."/>
            <person name="Celniker S.E."/>
            <person name="de Grey A.D.N.J."/>
            <person name="Drysdale R.A."/>
            <person name="Harris N.L."/>
            <person name="Richter J."/>
            <person name="Russo S."/>
            <person name="Schroeder A.J."/>
            <person name="Shu S.Q."/>
            <person name="Stapleton M."/>
            <person name="Yamada C."/>
            <person name="Ashburner M."/>
            <person name="Gelbart W.M."/>
            <person name="Rubin G.M."/>
            <person name="Lewis S.E."/>
        </authorList>
    </citation>
    <scope>GENOME REANNOTATION</scope>
    <source>
        <strain>Berkeley</strain>
    </source>
</reference>
<reference evidence="11" key="5">
    <citation type="journal article" date="2002" name="Genome Biol.">
        <title>A Drosophila full-length cDNA resource.</title>
        <authorList>
            <person name="Stapleton M."/>
            <person name="Carlson J.W."/>
            <person name="Brokstein P."/>
            <person name="Yu C."/>
            <person name="Champe M."/>
            <person name="George R.A."/>
            <person name="Guarin H."/>
            <person name="Kronmiller B."/>
            <person name="Pacleb J.M."/>
            <person name="Park S."/>
            <person name="Wan K.H."/>
            <person name="Rubin G.M."/>
            <person name="Celniker S.E."/>
        </authorList>
    </citation>
    <scope>NUCLEOTIDE SEQUENCE [LARGE SCALE MRNA]</scope>
    <source>
        <strain evidence="11">Berkeley</strain>
        <tissue evidence="5">Embryo</tissue>
    </source>
</reference>
<reference key="6">
    <citation type="journal article" date="2006" name="Genetics">
        <title>The twisted gene encodes Drosophila protein O-mannosyltransferase 2 and genetically interacts with the rotated abdomen gene encoding Drosophila protein O-mannosyltransferase 1.</title>
        <authorList>
            <person name="Lyalin D."/>
            <person name="Koles K."/>
            <person name="Roosendaal S.D."/>
            <person name="Repnikova E."/>
            <person name="Van Wechel L."/>
            <person name="Panin V.M."/>
        </authorList>
    </citation>
    <scope>FUNCTION</scope>
    <scope>SUBCELLULAR LOCATION</scope>
    <scope>DEVELOPMENTAL STAGE</scope>
</reference>
<organism>
    <name type="scientific">Drosophila melanogaster</name>
    <name type="common">Fruit fly</name>
    <dbReference type="NCBI Taxonomy" id="7227"/>
    <lineage>
        <taxon>Eukaryota</taxon>
        <taxon>Metazoa</taxon>
        <taxon>Ecdysozoa</taxon>
        <taxon>Arthropoda</taxon>
        <taxon>Hexapoda</taxon>
        <taxon>Insecta</taxon>
        <taxon>Pterygota</taxon>
        <taxon>Neoptera</taxon>
        <taxon>Endopterygota</taxon>
        <taxon>Diptera</taxon>
        <taxon>Brachycera</taxon>
        <taxon>Muscomorpha</taxon>
        <taxon>Ephydroidea</taxon>
        <taxon>Drosophilidae</taxon>
        <taxon>Drosophila</taxon>
        <taxon>Sophophora</taxon>
    </lineage>
</organism>
<evidence type="ECO:0000255" key="1"/>
<evidence type="ECO:0000255" key="2">
    <source>
        <dbReference type="PROSITE-ProRule" id="PRU00131"/>
    </source>
</evidence>
<evidence type="ECO:0000256" key="3">
    <source>
        <dbReference type="SAM" id="MobiDB-lite"/>
    </source>
</evidence>
<evidence type="ECO:0000269" key="4">
    <source>
    </source>
</evidence>
<evidence type="ECO:0000269" key="5">
    <source>
    </source>
</evidence>
<evidence type="ECO:0000269" key="6">
    <source>
    </source>
</evidence>
<evidence type="ECO:0000269" key="7">
    <source>
    </source>
</evidence>
<evidence type="ECO:0000269" key="8">
    <source>
    </source>
</evidence>
<evidence type="ECO:0000305" key="9"/>
<evidence type="ECO:0000312" key="10">
    <source>
        <dbReference type="EMBL" id="AAF50046.2"/>
    </source>
</evidence>
<evidence type="ECO:0000312" key="11">
    <source>
        <dbReference type="EMBL" id="AAL48892.1"/>
    </source>
</evidence>
<evidence type="ECO:0000312" key="12">
    <source>
        <dbReference type="EMBL" id="BAD54754.1"/>
    </source>
</evidence>
<evidence type="ECO:0000312" key="13">
    <source>
        <dbReference type="EMBL" id="CAA65194.1"/>
    </source>
</evidence>
<sequence length="886" mass="101194">MSATYTNTITQRRKTAKVRQQQQHQWTGSDLSGESNERLHFRSRSTNSMQQHTAISNSPSPLCCNGARALTMLNCCVDVNCHLNAPLRGSVNRHTTPTPTPTATPTPVATPKQASPSPTSDRSRSLSRSPSPSRSRSLSCQKQIDKNSAGAASAEERKTANASSQPFTVNLRIDLFSWTLFLLAFGTRFYKLATPPHIVFDELHYGKYISMYMRNIFFFDQHPPLGKQLIAGLVSLAGYDGNYTFTRIGEPYSPEMPIFWFRFLPAMCGSLLAPAVYNLLLEAKLSRWSSALGGLLVVLDNSLLTQSRFVLMESMLLLATTVGIACLLRFQRSRLGSLEWFFTGTAAAVCLGAAGTVKYVGFLALGLAFYLLCRHLWQLLYDAGLTDRQLWMHAISRLLIFVGIPLAVYLGVFYIHFKTLHRAGPHDSIMTSAFQASLDGGLASITKGQPLAVVHGSQITLRHTHGRTCWLHSHAAVYPVRYPDKRGSSHQQQVTCYSFKDVNNWWLVKRPTKENLVVGDEPDIIRHGEIIQLVHGITSRALNSHDVAAAMTPQCQEVSCYIDYEIKMAGELLWRVEILNRDSEGDIWHAIKSEVRLVHVSTEASLKFSGRQLPEWGFNQHEVVADREKAIHEDAIWNVEEHRYTQTEDHRERERQMLTAEMIPTKRTRISFWAKLLELQSKMLFQTKSVPNHMYSSMPHEWPLMDKGIAYWLDSQSSAQIYLLGNILLWYTATMGILVYAGLLAFYAMRRQRLCFDISEQEWQRFVLAGDTFFMGYVMHYIPYFCVDRTLFLHNYLPAFVFKLLLLCFVVEHLDYLLRRFCTGRGVHLVRLYRLMLILWLVGVLSIFSKFIPFSYGARKMTLNEVRSLRWKDTWDFVLHKNHHLY</sequence>
<gene>
    <name evidence="10" type="primary">rt</name>
    <name evidence="12" type="synonym">POMT1</name>
    <name type="ORF">CG6097</name>
</gene>
<keyword id="KW-0217">Developmental protein</keyword>
<keyword id="KW-0256">Endoplasmic reticulum</keyword>
<keyword id="KW-0325">Glycoprotein</keyword>
<keyword id="KW-0328">Glycosyltransferase</keyword>
<keyword id="KW-0472">Membrane</keyword>
<keyword id="KW-1185">Reference proteome</keyword>
<keyword id="KW-0677">Repeat</keyword>
<keyword id="KW-0808">Transferase</keyword>
<keyword id="KW-0812">Transmembrane</keyword>
<keyword id="KW-1133">Transmembrane helix</keyword>
<name>POMT1_DROME</name>
<feature type="chain" id="PRO_0000121487" description="Protein O-mannosyltransferase 1">
    <location>
        <begin position="1"/>
        <end position="886"/>
    </location>
</feature>
<feature type="transmembrane region" description="Helical" evidence="1">
    <location>
        <begin position="256"/>
        <end position="276"/>
    </location>
</feature>
<feature type="transmembrane region" description="Helical" evidence="1">
    <location>
        <begin position="310"/>
        <end position="330"/>
    </location>
</feature>
<feature type="transmembrane region" description="Helical" evidence="1">
    <location>
        <begin position="349"/>
        <end position="369"/>
    </location>
</feature>
<feature type="transmembrane region" description="Helical" evidence="1">
    <location>
        <begin position="398"/>
        <end position="418"/>
    </location>
</feature>
<feature type="transmembrane region" description="Helical" evidence="1">
    <location>
        <begin position="727"/>
        <end position="747"/>
    </location>
</feature>
<feature type="transmembrane region" description="Helical" evidence="1">
    <location>
        <begin position="791"/>
        <end position="811"/>
    </location>
</feature>
<feature type="transmembrane region" description="Helical" evidence="1">
    <location>
        <begin position="835"/>
        <end position="855"/>
    </location>
</feature>
<feature type="domain" description="MIR 1" evidence="2">
    <location>
        <begin position="450"/>
        <end position="511"/>
    </location>
</feature>
<feature type="domain" description="MIR 2" evidence="2">
    <location>
        <begin position="522"/>
        <end position="579"/>
    </location>
</feature>
<feature type="domain" description="MIR 3" evidence="2">
    <location>
        <begin position="585"/>
        <end position="642"/>
    </location>
</feature>
<feature type="region of interest" description="Disordered" evidence="3">
    <location>
        <begin position="1"/>
        <end position="37"/>
    </location>
</feature>
<feature type="region of interest" description="Disordered" evidence="3">
    <location>
        <begin position="88"/>
        <end position="161"/>
    </location>
</feature>
<feature type="compositionally biased region" description="Polar residues" evidence="3">
    <location>
        <begin position="1"/>
        <end position="10"/>
    </location>
</feature>
<feature type="compositionally biased region" description="Polar residues" evidence="3">
    <location>
        <begin position="18"/>
        <end position="34"/>
    </location>
</feature>
<feature type="compositionally biased region" description="Low complexity" evidence="3">
    <location>
        <begin position="105"/>
        <end position="139"/>
    </location>
</feature>
<feature type="glycosylation site" description="N-linked (GlcNAc...) asparagine" evidence="1">
    <location>
        <position position="161"/>
    </location>
</feature>
<feature type="glycosylation site" description="N-linked (GlcNAc...) asparagine" evidence="1">
    <location>
        <position position="242"/>
    </location>
</feature>
<feature type="sequence conflict" description="In Ref. 1; CAA65194." evidence="9" ref="1">
    <original>LRGS</original>
    <variation>APGR</variation>
    <location>
        <begin position="87"/>
        <end position="90"/>
    </location>
</feature>
<feature type="sequence conflict" description="In Ref. 1; CAA65194." evidence="9" ref="1">
    <original>A</original>
    <variation>T</variation>
    <location>
        <position position="184"/>
    </location>
</feature>
<feature type="sequence conflict" description="In Ref. 1; CAA65194." evidence="9" ref="1">
    <original>QL</original>
    <variation>TV</variation>
    <location>
        <begin position="228"/>
        <end position="229"/>
    </location>
</feature>
<feature type="sequence conflict" description="In Ref. 1; CAA65194." evidence="9" ref="1">
    <original>LVS</original>
    <variation>TGH</variation>
    <location>
        <begin position="233"/>
        <end position="235"/>
    </location>
</feature>
<feature type="sequence conflict" description="In Ref. 5; AAL48892." evidence="9" ref="5">
    <original>S</original>
    <variation>I</variation>
    <location>
        <position position="432"/>
    </location>
</feature>
<feature type="sequence conflict" description="In Ref. 1; CAA65194." evidence="9" ref="1">
    <original>A</original>
    <variation>T</variation>
    <location>
        <position position="443"/>
    </location>
</feature>
<feature type="sequence conflict" description="In Ref. 1; CAA65194." evidence="9" ref="1">
    <original>QI</original>
    <variation>KS</variation>
    <location>
        <begin position="458"/>
        <end position="459"/>
    </location>
</feature>
<feature type="sequence conflict" description="In Ref. 1; CAA65194." evidence="9" ref="1">
    <original>ENLVV</original>
    <variation>RTWWW</variation>
    <location>
        <begin position="514"/>
        <end position="518"/>
    </location>
</feature>
<feature type="sequence conflict" description="In Ref. 1; CAA65194." evidence="9" ref="1">
    <original>E</original>
    <variation>K</variation>
    <location>
        <position position="594"/>
    </location>
</feature>
<feature type="sequence conflict" description="In Ref. 1; CAA65194." evidence="9" ref="1">
    <original>E</original>
    <variation>K</variation>
    <location>
        <position position="633"/>
    </location>
</feature>
<feature type="sequence conflict" description="In Ref. 2; BAD54754." evidence="9" ref="2">
    <original>T</original>
    <variation>I</variation>
    <location>
        <position position="645"/>
    </location>
</feature>
<feature type="sequence conflict" description="In Ref. 1; CAA65194." evidence="9" ref="1">
    <original>R</original>
    <variation>P</variation>
    <location>
        <position position="655"/>
    </location>
</feature>
<feature type="sequence conflict" description="In Ref. 5; AAL48892." evidence="9" ref="5">
    <original>K</original>
    <variation>R</variation>
    <location>
        <position position="803"/>
    </location>
</feature>
<feature type="sequence conflict" description="In Ref. 1; CAA65194." evidence="9" ref="1">
    <original>V</original>
    <variation>E</variation>
    <location>
        <position position="844"/>
    </location>
</feature>
<proteinExistence type="evidence at transcript level"/>
<comment type="function">
    <text evidence="6 7 8">Rt/POMT1 and tw/POMT2 function as a protein O-mannosyltransferase in association with each other to generate and maintain normal muscle development.</text>
</comment>
<comment type="catalytic activity">
    <reaction>
        <text>a di-trans,poly-cis-dolichyl beta-D-mannosyl phosphate + L-seryl-[protein] = 3-O-(alpha-D-mannosyl)-L-seryl-[protein] + a di-trans,poly-cis-dolichyl phosphate + H(+)</text>
        <dbReference type="Rhea" id="RHEA:17377"/>
        <dbReference type="Rhea" id="RHEA-COMP:9863"/>
        <dbReference type="Rhea" id="RHEA-COMP:13546"/>
        <dbReference type="Rhea" id="RHEA-COMP:19498"/>
        <dbReference type="Rhea" id="RHEA-COMP:19501"/>
        <dbReference type="ChEBI" id="CHEBI:15378"/>
        <dbReference type="ChEBI" id="CHEBI:29999"/>
        <dbReference type="ChEBI" id="CHEBI:57683"/>
        <dbReference type="ChEBI" id="CHEBI:58211"/>
        <dbReference type="ChEBI" id="CHEBI:137321"/>
        <dbReference type="EC" id="2.4.1.109"/>
    </reaction>
</comment>
<comment type="catalytic activity">
    <reaction>
        <text>a di-trans,poly-cis-dolichyl beta-D-mannosyl phosphate + L-threonyl-[protein] = 3-O-(alpha-D-mannosyl)-L-threonyl-[protein] + a di-trans,poly-cis-dolichyl phosphate + H(+)</text>
        <dbReference type="Rhea" id="RHEA:53396"/>
        <dbReference type="Rhea" id="RHEA-COMP:11060"/>
        <dbReference type="Rhea" id="RHEA-COMP:13547"/>
        <dbReference type="Rhea" id="RHEA-COMP:19498"/>
        <dbReference type="Rhea" id="RHEA-COMP:19501"/>
        <dbReference type="ChEBI" id="CHEBI:15378"/>
        <dbReference type="ChEBI" id="CHEBI:30013"/>
        <dbReference type="ChEBI" id="CHEBI:57683"/>
        <dbReference type="ChEBI" id="CHEBI:58211"/>
        <dbReference type="ChEBI" id="CHEBI:137323"/>
        <dbReference type="EC" id="2.4.1.109"/>
    </reaction>
</comment>
<comment type="pathway">
    <text>Protein modification; protein glycosylation.</text>
</comment>
<comment type="subunit">
    <text evidence="9">Interacts with tw/POMT2.</text>
</comment>
<comment type="subcellular location">
    <subcellularLocation>
        <location evidence="7">Endoplasmic reticulum membrane</location>
        <topology evidence="7">Multi-pass membrane protein</topology>
    </subcellularLocation>
</comment>
<comment type="tissue specificity">
    <text evidence="6 8">At the cellular blastoderm stage, expression accumulates in the ventrally located mesoderm primordium. At germ band extension, mesoderm expression is seen as stripes of strong expression. A very strong signal is also detected in the invaginating gut. As the germ band retracts, mesodermal expression decays and becomes restricted to somatic muscle precursors. After dorsal closure, expression has disappeared from the mesoderm and remains in the endoderm. Some expression is detected in a few cells of the head and the pharyngeal muscles.</text>
</comment>
<comment type="developmental stage">
    <text evidence="6 7 8">Expressed both maternally and zygotically. Zygotic expression peaks at embryonic stages 8-16.</text>
</comment>
<comment type="disruption phenotype">
    <text evidence="6 8">Death during development, the few adult escapers exhibit clockwise rotation of the abdomen and defects in embryonic muscle development.</text>
</comment>
<comment type="similarity">
    <text evidence="1">Belongs to the glycosyltransferase 39 family.</text>
</comment>
<comment type="sequence caution" evidence="9">
    <conflict type="miscellaneous discrepancy">
        <sequence resource="EMBL-CDS" id="AAL48892"/>
    </conflict>
    <text>Intron retention.</text>
</comment>
<comment type="sequence caution" evidence="9">
    <conflict type="frameshift">
        <sequence resource="EMBL-CDS" id="CAA65194"/>
    </conflict>
</comment>
<protein>
    <recommendedName>
        <fullName>Protein O-mannosyltransferase 1</fullName>
        <ecNumber>2.4.1.109</ecNumber>
    </recommendedName>
    <alternativeName>
        <fullName>Dolichyl-phosphate-mannose--protein mannosyltransferase 1</fullName>
        <shortName>dPOMT1</shortName>
    </alternativeName>
    <alternativeName>
        <fullName>Protein rotated abdomen</fullName>
    </alternativeName>
</protein>
<accession>Q9VTK2</accession>
<accession>Q60GL9</accession>
<accession>Q8SYW7</accession>
<accession>Q94891</accession>